<feature type="chain" id="PRO_0000147095" description="Phosphoenolpyruvate-dependent phosphotransferase system">
    <location>
        <begin position="1"/>
        <end position="748"/>
    </location>
</feature>
<feature type="domain" description="GAF" evidence="7">
    <location>
        <begin position="1"/>
        <end position="127"/>
    </location>
</feature>
<feature type="region of interest" description="Linker" evidence="7">
    <location>
        <begin position="128"/>
        <end position="170"/>
    </location>
</feature>
<feature type="region of interest" description="PTS EI" evidence="7">
    <location>
        <begin position="171"/>
        <end position="748"/>
    </location>
</feature>
<feature type="active site" description="Tele-phosphohistidine intermediate" evidence="1">
    <location>
        <position position="356"/>
    </location>
</feature>
<feature type="active site" description="Proton donor" evidence="1">
    <location>
        <position position="668"/>
    </location>
</feature>
<feature type="binding site" evidence="2">
    <location>
        <position position="462"/>
    </location>
    <ligand>
        <name>phosphoenolpyruvate</name>
        <dbReference type="ChEBI" id="CHEBI:58702"/>
    </ligand>
</feature>
<feature type="binding site" evidence="1">
    <location>
        <position position="498"/>
    </location>
    <ligand>
        <name>phosphoenolpyruvate</name>
        <dbReference type="ChEBI" id="CHEBI:58702"/>
    </ligand>
</feature>
<feature type="binding site" evidence="1">
    <location>
        <position position="597"/>
    </location>
    <ligand>
        <name>Mg(2+)</name>
        <dbReference type="ChEBI" id="CHEBI:18420"/>
    </ligand>
</feature>
<feature type="binding site" evidence="1">
    <location>
        <begin position="620"/>
        <end position="621"/>
    </location>
    <ligand>
        <name>phosphoenolpyruvate</name>
        <dbReference type="ChEBI" id="CHEBI:58702"/>
    </ligand>
</feature>
<feature type="binding site" evidence="1">
    <location>
        <position position="621"/>
    </location>
    <ligand>
        <name>Mg(2+)</name>
        <dbReference type="ChEBI" id="CHEBI:18420"/>
    </ligand>
</feature>
<feature type="binding site" evidence="2">
    <location>
        <position position="631"/>
    </location>
    <ligand>
        <name>phosphoenolpyruvate</name>
        <dbReference type="ChEBI" id="CHEBI:58702"/>
    </ligand>
</feature>
<feature type="strand" evidence="8">
    <location>
        <begin position="174"/>
        <end position="177"/>
    </location>
</feature>
<feature type="strand" evidence="8">
    <location>
        <begin position="180"/>
        <end position="187"/>
    </location>
</feature>
<feature type="turn" evidence="8">
    <location>
        <begin position="193"/>
        <end position="196"/>
    </location>
</feature>
<feature type="helix" evidence="8">
    <location>
        <begin position="205"/>
        <end position="230"/>
    </location>
</feature>
<feature type="turn" evidence="8">
    <location>
        <begin position="231"/>
        <end position="234"/>
    </location>
</feature>
<feature type="helix" evidence="8">
    <location>
        <begin position="237"/>
        <end position="249"/>
    </location>
</feature>
<feature type="helix" evidence="8">
    <location>
        <begin position="252"/>
        <end position="263"/>
    </location>
</feature>
<feature type="helix" evidence="8">
    <location>
        <begin position="268"/>
        <end position="284"/>
    </location>
</feature>
<feature type="helix" evidence="8">
    <location>
        <begin position="289"/>
        <end position="292"/>
    </location>
</feature>
<feature type="helix" evidence="8">
    <location>
        <begin position="295"/>
        <end position="309"/>
    </location>
</feature>
<feature type="strand" evidence="8">
    <location>
        <begin position="321"/>
        <end position="328"/>
    </location>
</feature>
<feature type="helix" evidence="8">
    <location>
        <begin position="332"/>
        <end position="335"/>
    </location>
</feature>
<feature type="turn" evidence="8">
    <location>
        <begin position="340"/>
        <end position="342"/>
    </location>
</feature>
<feature type="strand" evidence="8">
    <location>
        <begin position="343"/>
        <end position="350"/>
    </location>
</feature>
<feature type="helix" evidence="8">
    <location>
        <begin position="356"/>
        <end position="364"/>
    </location>
</feature>
<feature type="strand" evidence="8">
    <location>
        <begin position="368"/>
        <end position="371"/>
    </location>
</feature>
<feature type="helix" evidence="8">
    <location>
        <begin position="376"/>
        <end position="379"/>
    </location>
</feature>
<feature type="strand" evidence="8">
    <location>
        <begin position="382"/>
        <end position="387"/>
    </location>
</feature>
<feature type="turn" evidence="8">
    <location>
        <begin position="388"/>
        <end position="391"/>
    </location>
</feature>
<feature type="strand" evidence="8">
    <location>
        <begin position="392"/>
        <end position="395"/>
    </location>
</feature>
<feature type="helix" evidence="8">
    <location>
        <begin position="397"/>
        <end position="410"/>
    </location>
</feature>
<gene>
    <name type="primary">ptsP</name>
    <name type="synonym">ygdF</name>
    <name type="synonym">ygdO</name>
    <name type="ordered locus">b2829</name>
    <name type="ordered locus">JW2797</name>
</gene>
<protein>
    <recommendedName>
        <fullName evidence="5">Phosphoenolpyruvate-dependent phosphotransferase system</fullName>
        <ecNumber evidence="3">2.7.3.9</ecNumber>
    </recommendedName>
    <alternativeName>
        <fullName evidence="5">Enzyme I-Ntr</fullName>
        <shortName evidence="5">EINtr</shortName>
    </alternativeName>
    <alternativeName>
        <fullName evidence="5">Phosphotransferase system, enzyme I</fullName>
    </alternativeName>
</protein>
<evidence type="ECO:0000250" key="1">
    <source>
        <dbReference type="UniProtKB" id="P08839"/>
    </source>
</evidence>
<evidence type="ECO:0000250" key="2">
    <source>
        <dbReference type="UniProtKB" id="P23533"/>
    </source>
</evidence>
<evidence type="ECO:0000269" key="3">
    <source>
    </source>
</evidence>
<evidence type="ECO:0000269" key="4">
    <source>
    </source>
</evidence>
<evidence type="ECO:0000303" key="5">
    <source>
    </source>
</evidence>
<evidence type="ECO:0000305" key="6"/>
<evidence type="ECO:0000305" key="7">
    <source>
    </source>
</evidence>
<evidence type="ECO:0007829" key="8">
    <source>
        <dbReference type="PDB" id="5T12"/>
    </source>
</evidence>
<reference key="1">
    <citation type="journal article" date="1997" name="Science">
        <title>The complete genome sequence of Escherichia coli K-12.</title>
        <authorList>
            <person name="Blattner F.R."/>
            <person name="Plunkett G. III"/>
            <person name="Bloch C.A."/>
            <person name="Perna N.T."/>
            <person name="Burland V."/>
            <person name="Riley M."/>
            <person name="Collado-Vides J."/>
            <person name="Glasner J.D."/>
            <person name="Rode C.K."/>
            <person name="Mayhew G.F."/>
            <person name="Gregor J."/>
            <person name="Davis N.W."/>
            <person name="Kirkpatrick H.A."/>
            <person name="Goeden M.A."/>
            <person name="Rose D.J."/>
            <person name="Mau B."/>
            <person name="Shao Y."/>
        </authorList>
    </citation>
    <scope>NUCLEOTIDE SEQUENCE [LARGE SCALE GENOMIC DNA]</scope>
    <source>
        <strain>K12 / MG1655 / ATCC 47076</strain>
    </source>
</reference>
<reference key="2">
    <citation type="journal article" date="2006" name="Mol. Syst. Biol.">
        <title>Highly accurate genome sequences of Escherichia coli K-12 strains MG1655 and W3110.</title>
        <authorList>
            <person name="Hayashi K."/>
            <person name="Morooka N."/>
            <person name="Yamamoto Y."/>
            <person name="Fujita K."/>
            <person name="Isono K."/>
            <person name="Choi S."/>
            <person name="Ohtsubo E."/>
            <person name="Baba T."/>
            <person name="Wanner B.L."/>
            <person name="Mori H."/>
            <person name="Horiuchi T."/>
        </authorList>
    </citation>
    <scope>NUCLEOTIDE SEQUENCE [LARGE SCALE GENOMIC DNA]</scope>
    <source>
        <strain>K12 / W3110 / ATCC 27325 / DSM 5911</strain>
    </source>
</reference>
<reference key="3">
    <citation type="journal article" date="1995" name="J. Bacteriol.">
        <title>The umpA gene of Escherichia coli encodes phosphatidylglycerol:prolipoprotein diacylglyceryl transferase (lgt) and regulates thymidylate synthase levels through translational coupling.</title>
        <authorList>
            <person name="Gan K."/>
            <person name="Sankaran K."/>
            <person name="Williams M.G."/>
            <person name="Aldea M."/>
            <person name="Rudd K.E."/>
            <person name="Kushner S.R."/>
            <person name="Wu H.C."/>
        </authorList>
    </citation>
    <scope>NUCLEOTIDE SEQUENCE [GENOMIC DNA] OF 656-748</scope>
</reference>
<reference key="4">
    <citation type="journal article" date="1996" name="Gene">
        <title>Novel phosphotransferase-encoding genes revealed by analysis of the Escherichia coli genome: a chimeric gene encoding an Enzyme I homologue that possesses a putative sensory transduction domain.</title>
        <authorList>
            <person name="Reizer J."/>
            <person name="Reizer A."/>
            <person name="Merrick M.J."/>
            <person name="Plunkett G. III"/>
            <person name="Rose D.J."/>
            <person name="Saier M.H. Jr."/>
        </authorList>
    </citation>
    <scope>FUNCTION</scope>
    <scope>DISCUSSION OF SEQUENCE</scope>
</reference>
<reference key="5">
    <citation type="journal article" date="1999" name="J. Biol. Chem.">
        <title>Enzyme I(Ntr) from Escherichia coli. A novel enzyme of the phosphoenolpyruvate-dependent phosphotransferase system exhibiting strict specificity for its phosphoryl acceptor, NPr.</title>
        <authorList>
            <person name="Rabus R."/>
            <person name="Reizer J."/>
            <person name="Paulsen I."/>
            <person name="Saier M.H. Jr."/>
        </authorList>
    </citation>
    <scope>FUNCTION</scope>
    <scope>CATALYTIC ACTIVITY</scope>
    <scope>BIOPHYSICOCHEMICAL PROPERTIES</scope>
    <scope>COFACTOR</scope>
    <scope>ACTIVITY REGULATION</scope>
    <scope>SUBSTRATE SPECIFICITY</scope>
</reference>
<name>PT1P_ECOLI</name>
<organism>
    <name type="scientific">Escherichia coli (strain K12)</name>
    <dbReference type="NCBI Taxonomy" id="83333"/>
    <lineage>
        <taxon>Bacteria</taxon>
        <taxon>Pseudomonadati</taxon>
        <taxon>Pseudomonadota</taxon>
        <taxon>Gammaproteobacteria</taxon>
        <taxon>Enterobacterales</taxon>
        <taxon>Enterobacteriaceae</taxon>
        <taxon>Escherichia</taxon>
    </lineage>
</organism>
<accession>P37177</accession>
<accession>Q2MA08</accession>
<dbReference type="EC" id="2.7.3.9" evidence="3"/>
<dbReference type="EMBL" id="U29581">
    <property type="protein sequence ID" value="AAB40476.1"/>
    <property type="molecule type" value="Genomic_DNA"/>
</dbReference>
<dbReference type="EMBL" id="U00096">
    <property type="protein sequence ID" value="AAC75868.1"/>
    <property type="molecule type" value="Genomic_DNA"/>
</dbReference>
<dbReference type="EMBL" id="AP009048">
    <property type="protein sequence ID" value="BAE76898.1"/>
    <property type="molecule type" value="Genomic_DNA"/>
</dbReference>
<dbReference type="EMBL" id="U12289">
    <property type="protein sequence ID" value="AAA69023.1"/>
    <property type="molecule type" value="Genomic_DNA"/>
</dbReference>
<dbReference type="PIR" id="F65065">
    <property type="entry name" value="F65065"/>
</dbReference>
<dbReference type="RefSeq" id="NP_417306.1">
    <property type="nucleotide sequence ID" value="NC_000913.3"/>
</dbReference>
<dbReference type="RefSeq" id="WP_000957910.1">
    <property type="nucleotide sequence ID" value="NZ_LN832404.1"/>
</dbReference>
<dbReference type="PDB" id="5T12">
    <property type="method" value="X-ray"/>
    <property type="resolution" value="2.30 A"/>
    <property type="chains" value="A=170-424"/>
</dbReference>
<dbReference type="PDB" id="5T1O">
    <property type="method" value="NMR"/>
    <property type="chains" value="B=170-424"/>
</dbReference>
<dbReference type="PDBsum" id="5T12"/>
<dbReference type="PDBsum" id="5T1O"/>
<dbReference type="SASBDB" id="P37177"/>
<dbReference type="SMR" id="P37177"/>
<dbReference type="BioGRID" id="4263274">
    <property type="interactions" value="32"/>
</dbReference>
<dbReference type="BioGRID" id="851629">
    <property type="interactions" value="4"/>
</dbReference>
<dbReference type="FunCoup" id="P37177">
    <property type="interactions" value="121"/>
</dbReference>
<dbReference type="IntAct" id="P37177">
    <property type="interactions" value="10"/>
</dbReference>
<dbReference type="STRING" id="511145.b2829"/>
<dbReference type="jPOST" id="P37177"/>
<dbReference type="PaxDb" id="511145-b2829"/>
<dbReference type="EnsemblBacteria" id="AAC75868">
    <property type="protein sequence ID" value="AAC75868"/>
    <property type="gene ID" value="b2829"/>
</dbReference>
<dbReference type="GeneID" id="947301"/>
<dbReference type="KEGG" id="ecj:JW2797"/>
<dbReference type="KEGG" id="eco:b2829"/>
<dbReference type="KEGG" id="ecoc:C3026_15530"/>
<dbReference type="PATRIC" id="fig|1411691.4.peg.3906"/>
<dbReference type="EchoBASE" id="EB2105"/>
<dbReference type="eggNOG" id="COG3605">
    <property type="taxonomic scope" value="Bacteria"/>
</dbReference>
<dbReference type="HOGENOM" id="CLU_007308_7_1_6"/>
<dbReference type="InParanoid" id="P37177"/>
<dbReference type="OMA" id="IYLADHD"/>
<dbReference type="OrthoDB" id="9765468at2"/>
<dbReference type="PhylomeDB" id="P37177"/>
<dbReference type="BioCyc" id="EcoCyc:EG12188-MONOMER"/>
<dbReference type="BioCyc" id="MetaCyc:EG12188-MONOMER"/>
<dbReference type="PRO" id="PR:P37177"/>
<dbReference type="Proteomes" id="UP000000625">
    <property type="component" value="Chromosome"/>
</dbReference>
<dbReference type="GO" id="GO:0005737">
    <property type="term" value="C:cytoplasm"/>
    <property type="evidence" value="ECO:0007669"/>
    <property type="project" value="UniProtKB-SubCell"/>
</dbReference>
<dbReference type="GO" id="GO:0016301">
    <property type="term" value="F:kinase activity"/>
    <property type="evidence" value="ECO:0007669"/>
    <property type="project" value="UniProtKB-KW"/>
</dbReference>
<dbReference type="GO" id="GO:0046872">
    <property type="term" value="F:metal ion binding"/>
    <property type="evidence" value="ECO:0007669"/>
    <property type="project" value="UniProtKB-KW"/>
</dbReference>
<dbReference type="GO" id="GO:0008965">
    <property type="term" value="F:phosphoenolpyruvate-protein phosphotransferase activity"/>
    <property type="evidence" value="ECO:0000314"/>
    <property type="project" value="EcoCyc"/>
</dbReference>
<dbReference type="GO" id="GO:0015764">
    <property type="term" value="P:N-acetylglucosamine transport"/>
    <property type="evidence" value="ECO:0000318"/>
    <property type="project" value="GO_Central"/>
</dbReference>
<dbReference type="GO" id="GO:0009401">
    <property type="term" value="P:phosphoenolpyruvate-dependent sugar phosphotransferase system"/>
    <property type="evidence" value="ECO:0007669"/>
    <property type="project" value="UniProtKB-KW"/>
</dbReference>
<dbReference type="FunFam" id="1.10.274.10:FF:000002">
    <property type="entry name" value="Phosphoenolpyruvate-protein phosphotransferase PtsP"/>
    <property type="match status" value="1"/>
</dbReference>
<dbReference type="FunFam" id="3.20.20.60:FF:000012">
    <property type="entry name" value="Phosphoenolpyruvate-protein phosphotransferase PtsP"/>
    <property type="match status" value="1"/>
</dbReference>
<dbReference type="FunFam" id="3.30.450.40:FF:000012">
    <property type="entry name" value="Phosphoenolpyruvate-protein phosphotransferase PtsP"/>
    <property type="match status" value="1"/>
</dbReference>
<dbReference type="FunFam" id="3.50.30.10:FF:000003">
    <property type="entry name" value="Phosphoenolpyruvate-protein phosphotransferase ptsP"/>
    <property type="match status" value="1"/>
</dbReference>
<dbReference type="Gene3D" id="3.30.450.40">
    <property type="match status" value="1"/>
</dbReference>
<dbReference type="Gene3D" id="3.20.20.60">
    <property type="entry name" value="Phosphoenolpyruvate-binding domains"/>
    <property type="match status" value="1"/>
</dbReference>
<dbReference type="Gene3D" id="3.50.30.10">
    <property type="entry name" value="Phosphohistidine domain"/>
    <property type="match status" value="1"/>
</dbReference>
<dbReference type="Gene3D" id="1.10.274.10">
    <property type="entry name" value="PtsI, HPr-binding domain"/>
    <property type="match status" value="1"/>
</dbReference>
<dbReference type="InterPro" id="IPR003018">
    <property type="entry name" value="GAF"/>
</dbReference>
<dbReference type="InterPro" id="IPR029016">
    <property type="entry name" value="GAF-like_dom_sf"/>
</dbReference>
<dbReference type="InterPro" id="IPR008279">
    <property type="entry name" value="PEP-util_enz_mobile_dom"/>
</dbReference>
<dbReference type="InterPro" id="IPR050499">
    <property type="entry name" value="PEP-utilizing_PTS_enzyme"/>
</dbReference>
<dbReference type="InterPro" id="IPR018274">
    <property type="entry name" value="PEP_util_AS"/>
</dbReference>
<dbReference type="InterPro" id="IPR000121">
    <property type="entry name" value="PEP_util_C"/>
</dbReference>
<dbReference type="InterPro" id="IPR023151">
    <property type="entry name" value="PEP_util_CS"/>
</dbReference>
<dbReference type="InterPro" id="IPR036637">
    <property type="entry name" value="Phosphohistidine_dom_sf"/>
</dbReference>
<dbReference type="InterPro" id="IPR006318">
    <property type="entry name" value="PTS_EI-like"/>
</dbReference>
<dbReference type="InterPro" id="IPR008731">
    <property type="entry name" value="PTS_EIN"/>
</dbReference>
<dbReference type="InterPro" id="IPR036618">
    <property type="entry name" value="PtsI_HPr-bd_sf"/>
</dbReference>
<dbReference type="InterPro" id="IPR015813">
    <property type="entry name" value="Pyrv/PenolPyrv_kinase-like_dom"/>
</dbReference>
<dbReference type="InterPro" id="IPR040442">
    <property type="entry name" value="Pyrv_kinase-like_dom_sf"/>
</dbReference>
<dbReference type="NCBIfam" id="NF008283">
    <property type="entry name" value="PRK11061.1"/>
    <property type="match status" value="1"/>
</dbReference>
<dbReference type="NCBIfam" id="TIGR01417">
    <property type="entry name" value="PTS_I_fam"/>
    <property type="match status" value="1"/>
</dbReference>
<dbReference type="PANTHER" id="PTHR46244:SF1">
    <property type="entry name" value="PHOSPHOENOLPYRUVATE-DEPENDENT PHOSPHOTRANSFERASE SYSTEM"/>
    <property type="match status" value="1"/>
</dbReference>
<dbReference type="PANTHER" id="PTHR46244">
    <property type="entry name" value="PHOSPHOENOLPYRUVATE-PROTEIN PHOSPHOTRANSFERASE"/>
    <property type="match status" value="1"/>
</dbReference>
<dbReference type="Pfam" id="PF01590">
    <property type="entry name" value="GAF"/>
    <property type="match status" value="1"/>
</dbReference>
<dbReference type="Pfam" id="PF05524">
    <property type="entry name" value="PEP-utilisers_N"/>
    <property type="match status" value="1"/>
</dbReference>
<dbReference type="Pfam" id="PF00391">
    <property type="entry name" value="PEP-utilizers"/>
    <property type="match status" value="1"/>
</dbReference>
<dbReference type="Pfam" id="PF02896">
    <property type="entry name" value="PEP-utilizers_C"/>
    <property type="match status" value="1"/>
</dbReference>
<dbReference type="PRINTS" id="PR01736">
    <property type="entry name" value="PHPHTRNFRASE"/>
</dbReference>
<dbReference type="SMART" id="SM00065">
    <property type="entry name" value="GAF"/>
    <property type="match status" value="1"/>
</dbReference>
<dbReference type="SUPFAM" id="SSF47831">
    <property type="entry name" value="Enzyme I of the PEP:sugar phosphotransferase system HPr-binding (sub)domain"/>
    <property type="match status" value="1"/>
</dbReference>
<dbReference type="SUPFAM" id="SSF55781">
    <property type="entry name" value="GAF domain-like"/>
    <property type="match status" value="1"/>
</dbReference>
<dbReference type="SUPFAM" id="SSF51621">
    <property type="entry name" value="Phosphoenolpyruvate/pyruvate domain"/>
    <property type="match status" value="1"/>
</dbReference>
<dbReference type="SUPFAM" id="SSF52009">
    <property type="entry name" value="Phosphohistidine domain"/>
    <property type="match status" value="1"/>
</dbReference>
<dbReference type="PROSITE" id="PS00742">
    <property type="entry name" value="PEP_ENZYMES_2"/>
    <property type="match status" value="1"/>
</dbReference>
<dbReference type="PROSITE" id="PS00370">
    <property type="entry name" value="PEP_ENZYMES_PHOS_SITE"/>
    <property type="match status" value="1"/>
</dbReference>
<comment type="function">
    <text evidence="3 4">Component of the phosphoenolpyruvate-dependent nitrogen-metabolic phosphotransferase system (nitrogen-metabolic PTS), that seems to be involved in regulating nitrogen metabolism. Enzyme I-Ntr transfers the phosphoryl group from phosphoenolpyruvate (PEP) to the phosphoryl carrier protein (NPr) (PubMed:10473571). Could function in the transcriptional regulation of sigma-54 dependent operons in conjunction with the NPr (PtsO) and EIIA-Ntr (PtsN) proteins (PubMed:8973315). Enzyme I-Ntr is specific for NPr (PubMed:10473571).</text>
</comment>
<comment type="catalytic activity">
    <reaction evidence="3">
        <text>L-histidyl-[protein] + phosphoenolpyruvate = N(pros)-phospho-L-histidyl-[protein] + pyruvate</text>
        <dbReference type="Rhea" id="RHEA:23880"/>
        <dbReference type="Rhea" id="RHEA-COMP:9745"/>
        <dbReference type="Rhea" id="RHEA-COMP:9746"/>
        <dbReference type="ChEBI" id="CHEBI:15361"/>
        <dbReference type="ChEBI" id="CHEBI:29979"/>
        <dbReference type="ChEBI" id="CHEBI:58702"/>
        <dbReference type="ChEBI" id="CHEBI:64837"/>
        <dbReference type="EC" id="2.7.3.9"/>
    </reaction>
</comment>
<comment type="cofactor">
    <cofactor evidence="3">
        <name>Mg(2+)</name>
        <dbReference type="ChEBI" id="CHEBI:18420"/>
    </cofactor>
    <text evidence="3">Mn(2+) allows activity only at low concentrations. In the presence of low concentrations of Co(2+) or Ni(2+), activity could be measured, but at concentrations above 0.2 mM, strong inhibition is observed.</text>
</comment>
<comment type="activity regulation">
    <text evidence="3">Inhibited by GDP and FAD.</text>
</comment>
<comment type="biophysicochemical properties">
    <kinetics>
        <KM evidence="3">10 uM for mannitol phosphate</KM>
        <Vmax evidence="3">1.0 umol/min/mg enzyme</Vmax>
        <text evidence="3">Enzyme I-Ntr activity requires high ionic strength.</text>
    </kinetics>
    <phDependence>
        <text evidence="3">Optimum pH is 8.</text>
    </phDependence>
</comment>
<comment type="subcellular location">
    <subcellularLocation>
        <location evidence="6">Cytoplasm</location>
    </subcellularLocation>
</comment>
<comment type="domain">
    <text evidence="1">The EI N-terminal domain contains the HPr binding site, the central domain the pyrophosphate/phosphate carrier histidine, and the C-terminal domain the pyruvate binding site.</text>
</comment>
<comment type="domain">
    <text evidence="6">The GAF domain is an important site of signal perception in prokaryotes and eukaryotes.</text>
</comment>
<comment type="miscellaneous">
    <text evidence="1">The reaction takes place in three steps, mediated by a phosphocarrier histidine residue located on the surface of the central domain. The two first partial reactions are catalyzed at an active site located on the N-terminal domain, and the third partial reaction is catalyzed at an active site located on the C-terminal domain. For catalytic turnover, the central domain swivels from the concave surface of the N-terminal domain to that of the C-terminal domain.</text>
</comment>
<comment type="similarity">
    <text evidence="6">Belongs to the PEP-utilizing enzyme family.</text>
</comment>
<keyword id="KW-0002">3D-structure</keyword>
<keyword id="KW-0963">Cytoplasm</keyword>
<keyword id="KW-0418">Kinase</keyword>
<keyword id="KW-0460">Magnesium</keyword>
<keyword id="KW-0479">Metal-binding</keyword>
<keyword id="KW-0598">Phosphotransferase system</keyword>
<keyword id="KW-1185">Reference proteome</keyword>
<keyword id="KW-0762">Sugar transport</keyword>
<keyword id="KW-0808">Transferase</keyword>
<keyword id="KW-0813">Transport</keyword>
<sequence length="748" mass="83716">MLTRLREIVEKVASAPRLNEALNILVTDICLAMDTEVCSVYLADHDRRCYYLMATRGLKKPRGRTVTLAFDEGIVGLVGRLAEPINLADAQKHPSFKYIPSVKEERFRAFLGVPIIQRRQLLGVLVVQQRELRQYDESEESFLVTLATQMAAILSQSQLTALFGQYRQTRIRALPAAPGVAIAEGWQDATLPLMEQVYQASTLDPALERERLTGALEEAANEFRRYSKRFAAGAQKETAAIFDLYSHLLSDTRLRRELFAEVDKGSVAEWAVKTVIEKFAEQFAALSDNYLKERAGDLRALGQRLLFHLDDANQGPNAWPERFILVADELSATTLAELPQDRLVGVVVRDGAANSHAAIMVRALGIPTVMGADIQPSVLHRRTLIVDGYRGELLVDPEPVLLQEYQRLISEEIELSRLAEDDVNLPAQLKSGERIKVMLNAGLSPEHEEKLGSRIDGIGLYRTEIPFMLQSGFPSEEEQVAQYQGMLQMFNDKPVTLRTLDVGADKQLPYMPISEENPCLGWRGIRITLDQPEIFLIQVRAMLRANAATGNLNILLPMVTSLDEVDEARRLIERAGREVEEMIGYEIPKPRIGIMLEVPSMVFMLPHLAKRVDFISVGTNDLTQYILAVDRNNTRVANIYDSLHPAMLRALAMIAREAEIHGIDLRLCGEMAGDPMCVAILIGLGYRHLSMNGRSVARAKYLLRRIDYAEAENLAQRSLEAQLATEVRHQVAAFMERRGMGGLIRGGL</sequence>
<proteinExistence type="evidence at protein level"/>